<reference key="1">
    <citation type="submission" date="2007-05" db="EMBL/GenBank/DDBJ databases">
        <title>Identification and characterization of Waprins from the venom of Australian elapid snakes.</title>
        <authorList>
            <person name="St Pierre L."/>
        </authorList>
    </citation>
    <scope>NUCLEOTIDE SEQUENCE [MRNA]</scope>
    <source>
        <tissue>Venom gland</tissue>
    </source>
</reference>
<keyword id="KW-0044">Antibiotic</keyword>
<keyword id="KW-0929">Antimicrobial</keyword>
<keyword id="KW-1015">Disulfide bond</keyword>
<keyword id="KW-0964">Secreted</keyword>
<keyword id="KW-0732">Signal</keyword>
<dbReference type="EMBL" id="EF599320">
    <property type="protein sequence ID" value="ABW24188.1"/>
    <property type="molecule type" value="mRNA"/>
</dbReference>
<dbReference type="SMR" id="B5KGY9"/>
<dbReference type="GO" id="GO:0005576">
    <property type="term" value="C:extracellular region"/>
    <property type="evidence" value="ECO:0000250"/>
    <property type="project" value="UniProtKB"/>
</dbReference>
<dbReference type="GO" id="GO:0005615">
    <property type="term" value="C:extracellular space"/>
    <property type="evidence" value="ECO:0007669"/>
    <property type="project" value="TreeGrafter"/>
</dbReference>
<dbReference type="GO" id="GO:0004867">
    <property type="term" value="F:serine-type endopeptidase inhibitor activity"/>
    <property type="evidence" value="ECO:0007669"/>
    <property type="project" value="TreeGrafter"/>
</dbReference>
<dbReference type="GO" id="GO:0019731">
    <property type="term" value="P:antibacterial humoral response"/>
    <property type="evidence" value="ECO:0007669"/>
    <property type="project" value="TreeGrafter"/>
</dbReference>
<dbReference type="GO" id="GO:0045087">
    <property type="term" value="P:innate immune response"/>
    <property type="evidence" value="ECO:0007669"/>
    <property type="project" value="TreeGrafter"/>
</dbReference>
<dbReference type="GO" id="GO:0044278">
    <property type="term" value="P:venom-mediated disruption of cell wall in another organism"/>
    <property type="evidence" value="ECO:0000250"/>
    <property type="project" value="UniProtKB"/>
</dbReference>
<dbReference type="Gene3D" id="4.10.75.10">
    <property type="entry name" value="Elafin-like"/>
    <property type="match status" value="1"/>
</dbReference>
<dbReference type="InterPro" id="IPR036645">
    <property type="entry name" value="Elafin-like_sf"/>
</dbReference>
<dbReference type="InterPro" id="IPR008197">
    <property type="entry name" value="WAP_dom"/>
</dbReference>
<dbReference type="InterPro" id="IPR050514">
    <property type="entry name" value="WAP_four-disulfide_core"/>
</dbReference>
<dbReference type="PANTHER" id="PTHR19441:SF44">
    <property type="entry name" value="ANTILEUKOPROTEINASE"/>
    <property type="match status" value="1"/>
</dbReference>
<dbReference type="PANTHER" id="PTHR19441">
    <property type="entry name" value="WHEY ACDIC PROTEIN WAP"/>
    <property type="match status" value="1"/>
</dbReference>
<dbReference type="Pfam" id="PF00095">
    <property type="entry name" value="WAP"/>
    <property type="match status" value="1"/>
</dbReference>
<dbReference type="PRINTS" id="PR00003">
    <property type="entry name" value="4DISULPHCORE"/>
</dbReference>
<dbReference type="SMART" id="SM00217">
    <property type="entry name" value="WAP"/>
    <property type="match status" value="1"/>
</dbReference>
<dbReference type="SUPFAM" id="SSF57256">
    <property type="entry name" value="Elafin-like"/>
    <property type="match status" value="1"/>
</dbReference>
<dbReference type="PROSITE" id="PS51390">
    <property type="entry name" value="WAP"/>
    <property type="match status" value="1"/>
</dbReference>
<proteinExistence type="inferred from homology"/>
<name>WAPA_AUSSU</name>
<organism>
    <name type="scientific">Austrelaps superbus</name>
    <name type="common">Lowland copperhead snake</name>
    <name type="synonym">Hoplocephalus superbus</name>
    <dbReference type="NCBI Taxonomy" id="29156"/>
    <lineage>
        <taxon>Eukaryota</taxon>
        <taxon>Metazoa</taxon>
        <taxon>Chordata</taxon>
        <taxon>Craniata</taxon>
        <taxon>Vertebrata</taxon>
        <taxon>Euteleostomi</taxon>
        <taxon>Lepidosauria</taxon>
        <taxon>Squamata</taxon>
        <taxon>Bifurcata</taxon>
        <taxon>Unidentata</taxon>
        <taxon>Episquamata</taxon>
        <taxon>Toxicofera</taxon>
        <taxon>Serpentes</taxon>
        <taxon>Colubroidea</taxon>
        <taxon>Elapidae</taxon>
        <taxon>Hydrophiinae</taxon>
        <taxon>Austrelaps</taxon>
    </lineage>
</organism>
<accession>B5KGY9</accession>
<feature type="signal peptide" evidence="2">
    <location>
        <begin position="1"/>
        <end position="24"/>
    </location>
</feature>
<feature type="chain" id="PRO_5000395585" description="Supwaprin-a">
    <location>
        <begin position="25"/>
        <end position="75"/>
    </location>
</feature>
<feature type="domain" description="WAP" evidence="3">
    <location>
        <begin position="27"/>
        <end position="72"/>
    </location>
</feature>
<feature type="disulfide bond" evidence="3">
    <location>
        <begin position="34"/>
        <end position="60"/>
    </location>
</feature>
<feature type="disulfide bond" evidence="3">
    <location>
        <begin position="43"/>
        <end position="64"/>
    </location>
</feature>
<feature type="disulfide bond" evidence="3">
    <location>
        <begin position="47"/>
        <end position="59"/>
    </location>
</feature>
<feature type="disulfide bond" evidence="3">
    <location>
        <begin position="53"/>
        <end position="68"/>
    </location>
</feature>
<evidence type="ECO:0000250" key="1">
    <source>
        <dbReference type="UniProtKB" id="P83952"/>
    </source>
</evidence>
<evidence type="ECO:0000255" key="2"/>
<evidence type="ECO:0000255" key="3">
    <source>
        <dbReference type="PROSITE-ProRule" id="PRU00722"/>
    </source>
</evidence>
<evidence type="ECO:0000303" key="4">
    <source ref="1"/>
</evidence>
<evidence type="ECO:0000305" key="5"/>
<evidence type="ECO:0000305" key="6">
    <source ref="1"/>
</evidence>
<protein>
    <recommendedName>
        <fullName evidence="4">Supwaprin-a</fullName>
    </recommendedName>
</protein>
<sequence>MSSGGLLLLLGFLTLWAELTPVSGQDRPKKPGLCPPRPQKPPCVRECKNDWSCPGEQKCCRYGCIFECRDPIFVK</sequence>
<comment type="function">
    <text evidence="1">Damages membranes of susceptible bacteria. Has no hemolytic activity. Not toxic to mice. Does not inhibit the proteinases elastase and cathepsin G.</text>
</comment>
<comment type="subcellular location">
    <subcellularLocation>
        <location evidence="6">Secreted</location>
    </subcellularLocation>
</comment>
<comment type="tissue specificity">
    <text evidence="6">Expressed by the venom gland.</text>
</comment>
<comment type="similarity">
    <text evidence="5">Belongs to the venom waprin family.</text>
</comment>